<organism>
    <name type="scientific">Bos taurus</name>
    <name type="common">Bovine</name>
    <dbReference type="NCBI Taxonomy" id="9913"/>
    <lineage>
        <taxon>Eukaryota</taxon>
        <taxon>Metazoa</taxon>
        <taxon>Chordata</taxon>
        <taxon>Craniata</taxon>
        <taxon>Vertebrata</taxon>
        <taxon>Euteleostomi</taxon>
        <taxon>Mammalia</taxon>
        <taxon>Eutheria</taxon>
        <taxon>Laurasiatheria</taxon>
        <taxon>Artiodactyla</taxon>
        <taxon>Ruminantia</taxon>
        <taxon>Pecora</taxon>
        <taxon>Bovidae</taxon>
        <taxon>Bovinae</taxon>
        <taxon>Bos</taxon>
    </lineage>
</organism>
<keyword id="KW-0965">Cell junction</keyword>
<keyword id="KW-1003">Cell membrane</keyword>
<keyword id="KW-0966">Cell projection</keyword>
<keyword id="KW-0968">Cytoplasmic vesicle</keyword>
<keyword id="KW-0256">Endoplasmic reticulum</keyword>
<keyword id="KW-0551">Lipid droplet</keyword>
<keyword id="KW-0445">Lipid transport</keyword>
<keyword id="KW-0472">Membrane</keyword>
<keyword id="KW-0539">Nucleus</keyword>
<keyword id="KW-0628">Postsynaptic cell membrane</keyword>
<keyword id="KW-0675">Receptor</keyword>
<keyword id="KW-1185">Reference proteome</keyword>
<keyword id="KW-0770">Synapse</keyword>
<keyword id="KW-0812">Transmembrane</keyword>
<keyword id="KW-1133">Transmembrane helix</keyword>
<keyword id="KW-0813">Transport</keyword>
<reference key="1">
    <citation type="journal article" date="2005" name="BMC Genomics">
        <title>Characterization of 954 bovine full-CDS cDNA sequences.</title>
        <authorList>
            <person name="Harhay G.P."/>
            <person name="Sonstegard T.S."/>
            <person name="Keele J.W."/>
            <person name="Heaton M.P."/>
            <person name="Clawson M.L."/>
            <person name="Snelling W.M."/>
            <person name="Wiedmann R.T."/>
            <person name="Van Tassell C.P."/>
            <person name="Smith T.P.L."/>
        </authorList>
    </citation>
    <scope>NUCLEOTIDE SEQUENCE [LARGE SCALE MRNA]</scope>
</reference>
<evidence type="ECO:0000250" key="1">
    <source>
        <dbReference type="UniProtKB" id="O55242"/>
    </source>
</evidence>
<evidence type="ECO:0000250" key="2">
    <source>
        <dbReference type="UniProtKB" id="Q5BJF2"/>
    </source>
</evidence>
<evidence type="ECO:0000250" key="3">
    <source>
        <dbReference type="UniProtKB" id="Q60492"/>
    </source>
</evidence>
<evidence type="ECO:0000250" key="4">
    <source>
        <dbReference type="UniProtKB" id="Q99720"/>
    </source>
</evidence>
<evidence type="ECO:0000250" key="5">
    <source>
        <dbReference type="UniProtKB" id="Q9R0C9"/>
    </source>
</evidence>
<evidence type="ECO:0000305" key="6"/>
<gene>
    <name type="primary">SIGMAR1</name>
    <name type="synonym">OPRS1</name>
</gene>
<sequence>MCWAVGRRWAWAALLLAVAAVLAQVVWLWLGTQSFVFQHEEIAQLARQYAGLDHELAFSRLIVELRRLHPGHVLPDEDLQWVFVNAGGWMGAMCLLHASLSEYVLLFGTALGSSGHSGRYWAEISDTIISGTFHQWREGTTKSEVFYPGETVVHGPGEATAVEWGPNTWMVEYGRGVIPSTLGFALADTVFSTQDFLTLFYTLRAYARGLRLELTTYLFGQDA</sequence>
<protein>
    <recommendedName>
        <fullName>Sigma non-opioid intracellular receptor 1</fullName>
    </recommendedName>
    <alternativeName>
        <fullName>Sigma 1-type opioid receptor</fullName>
        <shortName>Sigma1-receptor</shortName>
        <shortName>Sigma1R</shortName>
    </alternativeName>
</protein>
<accession>Q58DH7</accession>
<proteinExistence type="evidence at transcript level"/>
<dbReference type="EMBL" id="BT021620">
    <property type="protein sequence ID" value="AAX46467.1"/>
    <property type="molecule type" value="mRNA"/>
</dbReference>
<dbReference type="RefSeq" id="NP_001029827.1">
    <property type="nucleotide sequence ID" value="NM_001034655.1"/>
</dbReference>
<dbReference type="SMR" id="Q58DH7"/>
<dbReference type="FunCoup" id="Q58DH7">
    <property type="interactions" value="781"/>
</dbReference>
<dbReference type="STRING" id="9913.ENSBTAP00000066304"/>
<dbReference type="SwissPalm" id="Q58DH7"/>
<dbReference type="PaxDb" id="9913-ENSBTAP00000020990"/>
<dbReference type="Ensembl" id="ENSBTAT00000020990.3">
    <property type="protein sequence ID" value="ENSBTAP00000020990.2"/>
    <property type="gene ID" value="ENSBTAG00000015804.4"/>
</dbReference>
<dbReference type="GeneID" id="538903"/>
<dbReference type="KEGG" id="bta:538903"/>
<dbReference type="CTD" id="10280"/>
<dbReference type="VEuPathDB" id="HostDB:ENSBTAG00000015804"/>
<dbReference type="VGNC" id="VGNC:34619">
    <property type="gene designation" value="SIGMAR1"/>
</dbReference>
<dbReference type="eggNOG" id="KOG4143">
    <property type="taxonomic scope" value="Eukaryota"/>
</dbReference>
<dbReference type="GeneTree" id="ENSGT00390000012082"/>
<dbReference type="HOGENOM" id="CLU_085469_0_0_1"/>
<dbReference type="InParanoid" id="Q58DH7"/>
<dbReference type="OMA" id="AMYVIHA"/>
<dbReference type="OrthoDB" id="347124at2759"/>
<dbReference type="TreeFam" id="TF300106"/>
<dbReference type="Proteomes" id="UP000009136">
    <property type="component" value="Chromosome 8"/>
</dbReference>
<dbReference type="Bgee" id="ENSBTAG00000015804">
    <property type="expression patterns" value="Expressed in diaphragm and 103 other cell types or tissues"/>
</dbReference>
<dbReference type="GO" id="GO:0070161">
    <property type="term" value="C:anchoring junction"/>
    <property type="evidence" value="ECO:0007669"/>
    <property type="project" value="UniProtKB-SubCell"/>
</dbReference>
<dbReference type="GO" id="GO:0031410">
    <property type="term" value="C:cytoplasmic vesicle"/>
    <property type="evidence" value="ECO:0007669"/>
    <property type="project" value="UniProtKB-KW"/>
</dbReference>
<dbReference type="GO" id="GO:0005783">
    <property type="term" value="C:endoplasmic reticulum"/>
    <property type="evidence" value="ECO:0000318"/>
    <property type="project" value="GO_Central"/>
</dbReference>
<dbReference type="GO" id="GO:0005789">
    <property type="term" value="C:endoplasmic reticulum membrane"/>
    <property type="evidence" value="ECO:0007669"/>
    <property type="project" value="UniProtKB-SubCell"/>
</dbReference>
<dbReference type="GO" id="GO:0030426">
    <property type="term" value="C:growth cone"/>
    <property type="evidence" value="ECO:0007669"/>
    <property type="project" value="UniProtKB-SubCell"/>
</dbReference>
<dbReference type="GO" id="GO:0005811">
    <property type="term" value="C:lipid droplet"/>
    <property type="evidence" value="ECO:0007669"/>
    <property type="project" value="UniProtKB-SubCell"/>
</dbReference>
<dbReference type="GO" id="GO:0016020">
    <property type="term" value="C:membrane"/>
    <property type="evidence" value="ECO:0000250"/>
    <property type="project" value="UniProtKB"/>
</dbReference>
<dbReference type="GO" id="GO:0005637">
    <property type="term" value="C:nuclear inner membrane"/>
    <property type="evidence" value="ECO:0007669"/>
    <property type="project" value="UniProtKB-SubCell"/>
</dbReference>
<dbReference type="GO" id="GO:0005640">
    <property type="term" value="C:nuclear outer membrane"/>
    <property type="evidence" value="ECO:0007669"/>
    <property type="project" value="UniProtKB-SubCell"/>
</dbReference>
<dbReference type="GO" id="GO:0014069">
    <property type="term" value="C:postsynaptic density"/>
    <property type="evidence" value="ECO:0000250"/>
    <property type="project" value="UniProtKB"/>
</dbReference>
<dbReference type="GO" id="GO:0098839">
    <property type="term" value="C:postsynaptic density membrane"/>
    <property type="evidence" value="ECO:0007669"/>
    <property type="project" value="UniProtKB-SubCell"/>
</dbReference>
<dbReference type="GO" id="GO:0038023">
    <property type="term" value="F:signaling receptor activity"/>
    <property type="evidence" value="ECO:0007669"/>
    <property type="project" value="Ensembl"/>
</dbReference>
<dbReference type="GO" id="GO:0006869">
    <property type="term" value="P:lipid transport"/>
    <property type="evidence" value="ECO:0007669"/>
    <property type="project" value="UniProtKB-KW"/>
</dbReference>
<dbReference type="GO" id="GO:0070207">
    <property type="term" value="P:protein homotrimerization"/>
    <property type="evidence" value="ECO:0007669"/>
    <property type="project" value="Ensembl"/>
</dbReference>
<dbReference type="GO" id="GO:0043523">
    <property type="term" value="P:regulation of neuron apoptotic process"/>
    <property type="evidence" value="ECO:0000250"/>
    <property type="project" value="UniProtKB"/>
</dbReference>
<dbReference type="InterPro" id="IPR006716">
    <property type="entry name" value="ERG2_sigma1_rcpt-like"/>
</dbReference>
<dbReference type="PANTHER" id="PTHR10868">
    <property type="entry name" value="SIGMA 1-TYPE OPIOID RECEPTOR-RELATED"/>
    <property type="match status" value="1"/>
</dbReference>
<dbReference type="PANTHER" id="PTHR10868:SF1">
    <property type="entry name" value="SIGMA NON-OPIOID INTRACELLULAR RECEPTOR 1"/>
    <property type="match status" value="1"/>
</dbReference>
<dbReference type="Pfam" id="PF04622">
    <property type="entry name" value="ERG2_Sigma1R"/>
    <property type="match status" value="1"/>
</dbReference>
<name>SGMR1_BOVIN</name>
<comment type="function">
    <text evidence="1 4">Functions in lipid transport from the endoplasmic reticulum and is involved in a wide array of cellular functions probably through regulation of the biogenesis of lipid microdomains at the plasma membrane. Involved in the regulation of different receptors it plays a role in BDNF signaling and EGF signaling. Also regulates ion channels like the potassium channel and could modulate neurotransmitter release. Plays a role in calcium signaling through modulation together with ANK2 of the ITP3R-dependent calcium efflux at the endoplasmic reticulum. Plays a role in several other cell functions including proliferation, survival and death. Originally identified for its ability to bind various psychoactive drugs it is involved in learning processes, memory and mood alteration (By similarity). Necessary for proper mitochondrial axonal transport in motor neurons, in particular the retrograde movement of mitochondria. Plays a role in protecting cells against oxidative stress-induced cell death via its interaction with RNF112 (By similarity).</text>
</comment>
<comment type="subunit">
    <text evidence="1 4 5">Homotrimer. Forms a ternary complex with ANK2 and ITPR3. The complex is disrupted by agonists. Interacts with KCNA4. Interacts with KCNA2; cocaine consumption leads to increased interaction. Interacts with RNF112 in an oxidative stress-regulated manner.</text>
</comment>
<comment type="subcellular location">
    <subcellularLocation>
        <location evidence="4">Nucleus inner membrane</location>
    </subcellularLocation>
    <subcellularLocation>
        <location evidence="4">Nucleus outer membrane</location>
    </subcellularLocation>
    <subcellularLocation>
        <location evidence="4">Nucleus envelope</location>
    </subcellularLocation>
    <subcellularLocation>
        <location evidence="4">Cytoplasmic vesicle</location>
    </subcellularLocation>
    <subcellularLocation>
        <location evidence="4">Endoplasmic reticulum membrane</location>
    </subcellularLocation>
    <subcellularLocation>
        <location evidence="4">Membrane</location>
        <topology evidence="4">Single-pass membrane protein</topology>
    </subcellularLocation>
    <subcellularLocation>
        <location evidence="1">Lipid droplet</location>
    </subcellularLocation>
    <subcellularLocation>
        <location evidence="4">Cell junction</location>
    </subcellularLocation>
    <subcellularLocation>
        <location evidence="4">Cell membrane</location>
    </subcellularLocation>
    <subcellularLocation>
        <location evidence="4">Cell projection</location>
        <location evidence="4">Growth cone</location>
    </subcellularLocation>
    <subcellularLocation>
        <location evidence="4">Postsynaptic density membrane</location>
    </subcellularLocation>
    <text evidence="1 4">During interphase, detected at the inner and outer nuclear membrane and the endoplasmic reticulum. Detected on cytoplasmic vesicles during mitosis. Targeted to lipid droplets, cholesterol and galactosylceramide-enriched domains of the endoplasmic reticulum (By similarity). Enriched at cell-cell communication regions, growth cone and postsynaptic structures. Localization is modulated by ligand-binding. In motor neurons it is enriched at cholinergic postsynaptic densities (By similarity).</text>
</comment>
<comment type="domain">
    <text evidence="4">The C-terminal helices form a flat, hydrophobic surface that is probably tightly associated with the cytosolic surface of the endoplasmic reticulum membrane.</text>
</comment>
<comment type="miscellaneous">
    <text evidence="2">Sigma receptors are classified into two subtypes (Sigma-1 and Sigma-2) based on their different pharmacological profile.</text>
</comment>
<comment type="similarity">
    <text evidence="6">Belongs to the ERG2 family.</text>
</comment>
<feature type="chain" id="PRO_0000268650" description="Sigma non-opioid intracellular receptor 1">
    <location>
        <begin position="1"/>
        <end position="223"/>
    </location>
</feature>
<feature type="topological domain" description="Lumenal" evidence="4">
    <location>
        <begin position="1"/>
        <end position="9"/>
    </location>
</feature>
<feature type="transmembrane region" description="Helical" evidence="4">
    <location>
        <begin position="10"/>
        <end position="30"/>
    </location>
</feature>
<feature type="topological domain" description="Cytoplasmic" evidence="4">
    <location>
        <begin position="31"/>
        <end position="223"/>
    </location>
</feature>
<feature type="region of interest" description="Targeting to endoplasmic reticulum-associated lipid droplets" evidence="1">
    <location>
        <begin position="2"/>
        <end position="8"/>
    </location>
</feature>
<feature type="region of interest" description="Important for ligand-binding" evidence="3">
    <location>
        <begin position="99"/>
        <end position="106"/>
    </location>
</feature>
<feature type="region of interest" description="C-terminal hydrophobic region" evidence="6">
    <location>
        <begin position="177"/>
        <end position="223"/>
    </location>
</feature>
<feature type="site" description="Important for ligand binding" evidence="4">
    <location>
        <position position="126"/>
    </location>
</feature>
<feature type="site" description="Important for ligand binding" evidence="4">
    <location>
        <position position="172"/>
    </location>
</feature>